<protein>
    <recommendedName>
        <fullName evidence="1">Probable cytosol aminopeptidase</fullName>
        <ecNumber evidence="1">3.4.11.1</ecNumber>
    </recommendedName>
    <alternativeName>
        <fullName evidence="1">Leucine aminopeptidase</fullName>
        <shortName evidence="1">LAP</shortName>
        <ecNumber evidence="1">3.4.11.10</ecNumber>
    </alternativeName>
    <alternativeName>
        <fullName evidence="1">Leucyl aminopeptidase</fullName>
    </alternativeName>
</protein>
<comment type="function">
    <text evidence="1">Presumably involved in the processing and regular turnover of intracellular proteins. Catalyzes the removal of unsubstituted N-terminal amino acids from various peptides.</text>
</comment>
<comment type="catalytic activity">
    <reaction evidence="1">
        <text>Release of an N-terminal amino acid, Xaa-|-Yaa-, in which Xaa is preferably Leu, but may be other amino acids including Pro although not Arg or Lys, and Yaa may be Pro. Amino acid amides and methyl esters are also readily hydrolyzed, but rates on arylamides are exceedingly low.</text>
        <dbReference type="EC" id="3.4.11.1"/>
    </reaction>
</comment>
<comment type="catalytic activity">
    <reaction evidence="1">
        <text>Release of an N-terminal amino acid, preferentially leucine, but not glutamic or aspartic acids.</text>
        <dbReference type="EC" id="3.4.11.10"/>
    </reaction>
</comment>
<comment type="cofactor">
    <cofactor evidence="1">
        <name>Mn(2+)</name>
        <dbReference type="ChEBI" id="CHEBI:29035"/>
    </cofactor>
    <text evidence="1">Binds 2 manganese ions per subunit.</text>
</comment>
<comment type="subcellular location">
    <subcellularLocation>
        <location evidence="1">Cytoplasm</location>
    </subcellularLocation>
</comment>
<comment type="similarity">
    <text evidence="1">Belongs to the peptidase M17 family.</text>
</comment>
<proteinExistence type="inferred from homology"/>
<organism>
    <name type="scientific">Nitratidesulfovibrio vulgaris (strain ATCC 29579 / DSM 644 / CCUG 34227 / NCIMB 8303 / VKM B-1760 / Hildenborough)</name>
    <name type="common">Desulfovibrio vulgaris</name>
    <dbReference type="NCBI Taxonomy" id="882"/>
    <lineage>
        <taxon>Bacteria</taxon>
        <taxon>Pseudomonadati</taxon>
        <taxon>Thermodesulfobacteriota</taxon>
        <taxon>Desulfovibrionia</taxon>
        <taxon>Desulfovibrionales</taxon>
        <taxon>Desulfovibrionaceae</taxon>
        <taxon>Nitratidesulfovibrio</taxon>
    </lineage>
</organism>
<dbReference type="EC" id="3.4.11.1" evidence="1"/>
<dbReference type="EC" id="3.4.11.10" evidence="1"/>
<dbReference type="EMBL" id="AE017285">
    <property type="protein sequence ID" value="AAS94898.1"/>
    <property type="molecule type" value="Genomic_DNA"/>
</dbReference>
<dbReference type="RefSeq" id="WP_010937722.1">
    <property type="nucleotide sequence ID" value="NC_002937.3"/>
</dbReference>
<dbReference type="RefSeq" id="YP_009639.1">
    <property type="nucleotide sequence ID" value="NC_002937.3"/>
</dbReference>
<dbReference type="SMR" id="Q72F03"/>
<dbReference type="IntAct" id="Q72F03">
    <property type="interactions" value="1"/>
</dbReference>
<dbReference type="STRING" id="882.DVU_0415"/>
<dbReference type="PaxDb" id="882-DVU_0415"/>
<dbReference type="EnsemblBacteria" id="AAS94898">
    <property type="protein sequence ID" value="AAS94898"/>
    <property type="gene ID" value="DVU_0415"/>
</dbReference>
<dbReference type="KEGG" id="dvu:DVU_0415"/>
<dbReference type="PATRIC" id="fig|882.5.peg.392"/>
<dbReference type="eggNOG" id="COG0260">
    <property type="taxonomic scope" value="Bacteria"/>
</dbReference>
<dbReference type="HOGENOM" id="CLU_013734_2_2_7"/>
<dbReference type="OrthoDB" id="9809354at2"/>
<dbReference type="PhylomeDB" id="Q72F03"/>
<dbReference type="Proteomes" id="UP000002194">
    <property type="component" value="Chromosome"/>
</dbReference>
<dbReference type="GO" id="GO:0005737">
    <property type="term" value="C:cytoplasm"/>
    <property type="evidence" value="ECO:0007669"/>
    <property type="project" value="UniProtKB-SubCell"/>
</dbReference>
<dbReference type="GO" id="GO:0030145">
    <property type="term" value="F:manganese ion binding"/>
    <property type="evidence" value="ECO:0007669"/>
    <property type="project" value="UniProtKB-UniRule"/>
</dbReference>
<dbReference type="GO" id="GO:0070006">
    <property type="term" value="F:metalloaminopeptidase activity"/>
    <property type="evidence" value="ECO:0007669"/>
    <property type="project" value="InterPro"/>
</dbReference>
<dbReference type="GO" id="GO:0006508">
    <property type="term" value="P:proteolysis"/>
    <property type="evidence" value="ECO:0007669"/>
    <property type="project" value="UniProtKB-KW"/>
</dbReference>
<dbReference type="CDD" id="cd00433">
    <property type="entry name" value="Peptidase_M17"/>
    <property type="match status" value="1"/>
</dbReference>
<dbReference type="Gene3D" id="3.40.220.10">
    <property type="entry name" value="Leucine Aminopeptidase, subunit E, domain 1"/>
    <property type="match status" value="1"/>
</dbReference>
<dbReference type="Gene3D" id="3.40.630.10">
    <property type="entry name" value="Zn peptidases"/>
    <property type="match status" value="1"/>
</dbReference>
<dbReference type="HAMAP" id="MF_00181">
    <property type="entry name" value="Cytosol_peptidase_M17"/>
    <property type="match status" value="1"/>
</dbReference>
<dbReference type="InterPro" id="IPR011356">
    <property type="entry name" value="Leucine_aapep/pepB"/>
</dbReference>
<dbReference type="InterPro" id="IPR043472">
    <property type="entry name" value="Macro_dom-like"/>
</dbReference>
<dbReference type="InterPro" id="IPR000819">
    <property type="entry name" value="Peptidase_M17_C"/>
</dbReference>
<dbReference type="InterPro" id="IPR023042">
    <property type="entry name" value="Peptidase_M17_leu_NH2_pept"/>
</dbReference>
<dbReference type="InterPro" id="IPR008283">
    <property type="entry name" value="Peptidase_M17_N"/>
</dbReference>
<dbReference type="NCBIfam" id="NF002073">
    <property type="entry name" value="PRK00913.1-2"/>
    <property type="match status" value="1"/>
</dbReference>
<dbReference type="NCBIfam" id="NF002074">
    <property type="entry name" value="PRK00913.1-4"/>
    <property type="match status" value="1"/>
</dbReference>
<dbReference type="NCBIfam" id="NF002077">
    <property type="entry name" value="PRK00913.2-4"/>
    <property type="match status" value="1"/>
</dbReference>
<dbReference type="PANTHER" id="PTHR11963:SF23">
    <property type="entry name" value="CYTOSOL AMINOPEPTIDASE"/>
    <property type="match status" value="1"/>
</dbReference>
<dbReference type="PANTHER" id="PTHR11963">
    <property type="entry name" value="LEUCINE AMINOPEPTIDASE-RELATED"/>
    <property type="match status" value="1"/>
</dbReference>
<dbReference type="Pfam" id="PF00883">
    <property type="entry name" value="Peptidase_M17"/>
    <property type="match status" value="1"/>
</dbReference>
<dbReference type="Pfam" id="PF02789">
    <property type="entry name" value="Peptidase_M17_N"/>
    <property type="match status" value="1"/>
</dbReference>
<dbReference type="PRINTS" id="PR00481">
    <property type="entry name" value="LAMNOPPTDASE"/>
</dbReference>
<dbReference type="SUPFAM" id="SSF52949">
    <property type="entry name" value="Macro domain-like"/>
    <property type="match status" value="1"/>
</dbReference>
<dbReference type="SUPFAM" id="SSF53187">
    <property type="entry name" value="Zn-dependent exopeptidases"/>
    <property type="match status" value="1"/>
</dbReference>
<dbReference type="PROSITE" id="PS00631">
    <property type="entry name" value="CYTOSOL_AP"/>
    <property type="match status" value="1"/>
</dbReference>
<evidence type="ECO:0000255" key="1">
    <source>
        <dbReference type="HAMAP-Rule" id="MF_00181"/>
    </source>
</evidence>
<feature type="chain" id="PRO_0000165749" description="Probable cytosol aminopeptidase">
    <location>
        <begin position="1"/>
        <end position="507"/>
    </location>
</feature>
<feature type="active site" evidence="1">
    <location>
        <position position="283"/>
    </location>
</feature>
<feature type="active site" evidence="1">
    <location>
        <position position="357"/>
    </location>
</feature>
<feature type="binding site" evidence="1">
    <location>
        <position position="271"/>
    </location>
    <ligand>
        <name>Mn(2+)</name>
        <dbReference type="ChEBI" id="CHEBI:29035"/>
        <label>2</label>
    </ligand>
</feature>
<feature type="binding site" evidence="1">
    <location>
        <position position="276"/>
    </location>
    <ligand>
        <name>Mn(2+)</name>
        <dbReference type="ChEBI" id="CHEBI:29035"/>
        <label>1</label>
    </ligand>
</feature>
<feature type="binding site" evidence="1">
    <location>
        <position position="276"/>
    </location>
    <ligand>
        <name>Mn(2+)</name>
        <dbReference type="ChEBI" id="CHEBI:29035"/>
        <label>2</label>
    </ligand>
</feature>
<feature type="binding site" evidence="1">
    <location>
        <position position="294"/>
    </location>
    <ligand>
        <name>Mn(2+)</name>
        <dbReference type="ChEBI" id="CHEBI:29035"/>
        <label>2</label>
    </ligand>
</feature>
<feature type="binding site" evidence="1">
    <location>
        <position position="353"/>
    </location>
    <ligand>
        <name>Mn(2+)</name>
        <dbReference type="ChEBI" id="CHEBI:29035"/>
        <label>1</label>
    </ligand>
</feature>
<feature type="binding site" evidence="1">
    <location>
        <position position="355"/>
    </location>
    <ligand>
        <name>Mn(2+)</name>
        <dbReference type="ChEBI" id="CHEBI:29035"/>
        <label>1</label>
    </ligand>
</feature>
<feature type="binding site" evidence="1">
    <location>
        <position position="355"/>
    </location>
    <ligand>
        <name>Mn(2+)</name>
        <dbReference type="ChEBI" id="CHEBI:29035"/>
        <label>2</label>
    </ligand>
</feature>
<gene>
    <name evidence="1" type="primary">pepA</name>
    <name type="ordered locus">DVU_0415</name>
</gene>
<keyword id="KW-0031">Aminopeptidase</keyword>
<keyword id="KW-0963">Cytoplasm</keyword>
<keyword id="KW-0378">Hydrolase</keyword>
<keyword id="KW-0464">Manganese</keyword>
<keyword id="KW-0479">Metal-binding</keyword>
<keyword id="KW-0645">Protease</keyword>
<keyword id="KW-1185">Reference proteome</keyword>
<sequence>MDIRFQAGGHAAWRAGAVMVFVFKDEPLAEVDSQLVEAAPWLTIAPAGNDFRAAKDEVAVLHGPPAFDIPRVVAVGLGKREDCTLERIRLAAAAGIRRCRDLRVENVGVVAAQLGRMAPTEHDALRVAEEVVCGALLGLYRYDRFRTVKDDERAEDPRWLALLCEGKNVPDDLHGAARKGEAVALGMGVARDLVNGPANIVTPAFLASEAEALGRKHGFRVEVLGRDELSSMGMGAFASVFRGAEEEARLIVIEHAPAGTEEQQPLVFVGKGVTFDTGGISLKPAAKMHEMKGDMAGAAAILGLFAALGERDLPRRVVGVLPCTENMPDGRATRPGDVVTTLSGKTVEILNTDAEGRLLLCDALTYAQRRWQPEALVDLATLTGACVVALGTEVAGLFCDDAALADAIASRGETVGDLFWPLPLWKSYAENLKSDVADLANVGPREGGAVNAALFLRQFIDDGVRWAHLDIAGPAFTAKKSALCPGGGTGFAVRTLFELVSEGIPAA</sequence>
<name>AMPA_NITV2</name>
<reference key="1">
    <citation type="journal article" date="2004" name="Nat. Biotechnol.">
        <title>The genome sequence of the anaerobic, sulfate-reducing bacterium Desulfovibrio vulgaris Hildenborough.</title>
        <authorList>
            <person name="Heidelberg J.F."/>
            <person name="Seshadri R."/>
            <person name="Haveman S.A."/>
            <person name="Hemme C.L."/>
            <person name="Paulsen I.T."/>
            <person name="Kolonay J.F."/>
            <person name="Eisen J.A."/>
            <person name="Ward N.L."/>
            <person name="Methe B.A."/>
            <person name="Brinkac L.M."/>
            <person name="Daugherty S.C."/>
            <person name="DeBoy R.T."/>
            <person name="Dodson R.J."/>
            <person name="Durkin A.S."/>
            <person name="Madupu R."/>
            <person name="Nelson W.C."/>
            <person name="Sullivan S.A."/>
            <person name="Fouts D.E."/>
            <person name="Haft D.H."/>
            <person name="Selengut J."/>
            <person name="Peterson J.D."/>
            <person name="Davidsen T.M."/>
            <person name="Zafar N."/>
            <person name="Zhou L."/>
            <person name="Radune D."/>
            <person name="Dimitrov G."/>
            <person name="Hance M."/>
            <person name="Tran K."/>
            <person name="Khouri H.M."/>
            <person name="Gill J."/>
            <person name="Utterback T.R."/>
            <person name="Feldblyum T.V."/>
            <person name="Wall J.D."/>
            <person name="Voordouw G."/>
            <person name="Fraser C.M."/>
        </authorList>
    </citation>
    <scope>NUCLEOTIDE SEQUENCE [LARGE SCALE GENOMIC DNA]</scope>
    <source>
        <strain>ATCC 29579 / DSM 644 / CCUG 34227 / NCIMB 8303 / VKM B-1760 / Hildenborough</strain>
    </source>
</reference>
<accession>Q72F03</accession>